<dbReference type="EC" id="5.4.99.25" evidence="1"/>
<dbReference type="EMBL" id="CP000968">
    <property type="protein sequence ID" value="ACB08336.1"/>
    <property type="molecule type" value="Genomic_DNA"/>
</dbReference>
<dbReference type="SMR" id="B1L7A7"/>
<dbReference type="STRING" id="374847.Kcr_1591"/>
<dbReference type="EnsemblBacteria" id="ACB08336">
    <property type="protein sequence ID" value="ACB08336"/>
    <property type="gene ID" value="Kcr_1591"/>
</dbReference>
<dbReference type="KEGG" id="kcr:Kcr_1591"/>
<dbReference type="eggNOG" id="arCOG01015">
    <property type="taxonomic scope" value="Archaea"/>
</dbReference>
<dbReference type="HOGENOM" id="CLU_028780_2_0_2"/>
<dbReference type="InParanoid" id="B1L7A7"/>
<dbReference type="PhylomeDB" id="B1L7A7"/>
<dbReference type="Proteomes" id="UP000001686">
    <property type="component" value="Chromosome"/>
</dbReference>
<dbReference type="GO" id="GO:0009982">
    <property type="term" value="F:pseudouridine synthase activity"/>
    <property type="evidence" value="ECO:0000318"/>
    <property type="project" value="GO_Central"/>
</dbReference>
<dbReference type="GO" id="GO:0000049">
    <property type="term" value="F:tRNA binding"/>
    <property type="evidence" value="ECO:0007669"/>
    <property type="project" value="InterPro"/>
</dbReference>
<dbReference type="GO" id="GO:0160148">
    <property type="term" value="F:tRNA pseudouridine(55) synthase activity"/>
    <property type="evidence" value="ECO:0007669"/>
    <property type="project" value="UniProtKB-EC"/>
</dbReference>
<dbReference type="GO" id="GO:0031119">
    <property type="term" value="P:tRNA pseudouridine synthesis"/>
    <property type="evidence" value="ECO:0000318"/>
    <property type="project" value="GO_Central"/>
</dbReference>
<dbReference type="FunFam" id="3.30.70.2510:FF:000001">
    <property type="entry name" value="tRNA pseudouridine synthase Pus10"/>
    <property type="match status" value="1"/>
</dbReference>
<dbReference type="Gene3D" id="3.30.70.2510">
    <property type="match status" value="1"/>
</dbReference>
<dbReference type="Gene3D" id="3.30.70.3190">
    <property type="match status" value="1"/>
</dbReference>
<dbReference type="HAMAP" id="MF_01893">
    <property type="entry name" value="Pus10_arch"/>
    <property type="match status" value="1"/>
</dbReference>
<dbReference type="InterPro" id="IPR020103">
    <property type="entry name" value="PsdUridine_synth_cat_dom_sf"/>
</dbReference>
<dbReference type="InterPro" id="IPR005912">
    <property type="entry name" value="Pus10"/>
</dbReference>
<dbReference type="InterPro" id="IPR039894">
    <property type="entry name" value="Pus10-like"/>
</dbReference>
<dbReference type="InterPro" id="IPR048741">
    <property type="entry name" value="Pus10-like_C"/>
</dbReference>
<dbReference type="NCBIfam" id="TIGR01213">
    <property type="entry name" value="pseudo_Pus10arc"/>
    <property type="match status" value="1"/>
</dbReference>
<dbReference type="PANTHER" id="PTHR21568">
    <property type="entry name" value="TRNA PSEUDOURIDINE SYNTHASE PUS10"/>
    <property type="match status" value="1"/>
</dbReference>
<dbReference type="PANTHER" id="PTHR21568:SF0">
    <property type="entry name" value="TRNA PSEUDOURIDINE SYNTHASE PUS10"/>
    <property type="match status" value="1"/>
</dbReference>
<dbReference type="Pfam" id="PF21238">
    <property type="entry name" value="Pus10_C"/>
    <property type="match status" value="1"/>
</dbReference>
<dbReference type="SUPFAM" id="SSF55120">
    <property type="entry name" value="Pseudouridine synthase"/>
    <property type="match status" value="1"/>
</dbReference>
<organism>
    <name type="scientific">Korarchaeum cryptofilum (strain OPF8)</name>
    <dbReference type="NCBI Taxonomy" id="374847"/>
    <lineage>
        <taxon>Archaea</taxon>
        <taxon>Thermoproteota</taxon>
        <taxon>Candidatus Korarchaeia</taxon>
        <taxon>Candidatus Korarchaeales</taxon>
        <taxon>Candidatus Korarchaeaceae</taxon>
        <taxon>Candidatus Korarchaeum</taxon>
    </lineage>
</organism>
<reference key="1">
    <citation type="journal article" date="2008" name="Proc. Natl. Acad. Sci. U.S.A.">
        <title>A korarchaeal genome reveals new insights into the evolution of the Archaea.</title>
        <authorList>
            <person name="Elkins J.G."/>
            <person name="Podar M."/>
            <person name="Graham D.E."/>
            <person name="Makarova K.S."/>
            <person name="Wolf Y."/>
            <person name="Randau L."/>
            <person name="Hedlund B.P."/>
            <person name="Brochier-Armanet C."/>
            <person name="Kunin V."/>
            <person name="Anderson I."/>
            <person name="Lapidus A."/>
            <person name="Goltsman E."/>
            <person name="Barry K."/>
            <person name="Koonin E.V."/>
            <person name="Hugenholtz P."/>
            <person name="Kyrpides N."/>
            <person name="Wanner G."/>
            <person name="Richardson P."/>
            <person name="Keller M."/>
            <person name="Stetter K.O."/>
        </authorList>
    </citation>
    <scope>NUCLEOTIDE SEQUENCE [LARGE SCALE GENOMIC DNA]</scope>
    <source>
        <strain>OPF8</strain>
    </source>
</reference>
<accession>B1L7A7</accession>
<name>PUS10_KORCO</name>
<comment type="function">
    <text evidence="1">Responsible for synthesis of pseudouridine from uracil-54 and uracil-55 in the psi GC loop of transfer RNAs.</text>
</comment>
<comment type="catalytic activity">
    <reaction evidence="1">
        <text>uridine(54) in tRNA = pseudouridine(54) in tRNA</text>
        <dbReference type="Rhea" id="RHEA:57876"/>
        <dbReference type="Rhea" id="RHEA-COMP:10193"/>
        <dbReference type="Rhea" id="RHEA-COMP:14141"/>
        <dbReference type="ChEBI" id="CHEBI:65314"/>
        <dbReference type="ChEBI" id="CHEBI:65315"/>
    </reaction>
</comment>
<comment type="catalytic activity">
    <reaction evidence="1">
        <text>uridine(55) in tRNA = pseudouridine(55) in tRNA</text>
        <dbReference type="Rhea" id="RHEA:42532"/>
        <dbReference type="Rhea" id="RHEA-COMP:10101"/>
        <dbReference type="Rhea" id="RHEA-COMP:10102"/>
        <dbReference type="ChEBI" id="CHEBI:65314"/>
        <dbReference type="ChEBI" id="CHEBI:65315"/>
        <dbReference type="EC" id="5.4.99.25"/>
    </reaction>
</comment>
<comment type="similarity">
    <text evidence="1">Belongs to the pseudouridine synthase Pus10 family.</text>
</comment>
<gene>
    <name evidence="1" type="primary">pus10</name>
    <name type="ordered locus">Kcr_1591</name>
</gene>
<feature type="chain" id="PRO_0000407387" description="tRNA pseudouridine synthase Pus10">
    <location>
        <begin position="1"/>
        <end position="373"/>
    </location>
</feature>
<feature type="active site" description="Nucleophile" evidence="1">
    <location>
        <position position="197"/>
    </location>
</feature>
<feature type="binding site" evidence="1">
    <location>
        <position position="265"/>
    </location>
    <ligand>
        <name>substrate</name>
    </ligand>
</feature>
<feature type="binding site" evidence="1">
    <location>
        <position position="336"/>
    </location>
    <ligand>
        <name>substrate</name>
    </ligand>
</feature>
<proteinExistence type="inferred from homology"/>
<sequence length="373" mass="41854">MGKPVDDLLNSLMNLLDSETPSGGGCHLCDGLLSRELGKMLRKALSELEGVELSSVKSGVSLPAILIEREDRIRANHNPPKMRSLKVTLTRLLDVAISSLTGLKVSQEPDAILIFDFERGDVKLELAPVFIFGRYRKLQRGISQSRRKCPECGGRGCEACGWKGKIPQGSVEGIVGEVMREFFSAEDYVLHGAGREDVDARMLGEGRPFVMELLSPKRRSADLREVESEINRRAAGLIEVKNLEFSRREKIRILKERSPNVKKLYRALVEVEGGVEEGELELLKGLEGAVIRQRTPKRVLWRRADITRLKRVYEVNFRRIDDKKFELFVLCDGGLYVKELISGDDGRTSPSVTEILGKKSFCSELDVLEVMVE</sequence>
<keyword id="KW-0413">Isomerase</keyword>
<keyword id="KW-1185">Reference proteome</keyword>
<keyword id="KW-0694">RNA-binding</keyword>
<keyword id="KW-0819">tRNA processing</keyword>
<evidence type="ECO:0000255" key="1">
    <source>
        <dbReference type="HAMAP-Rule" id="MF_01893"/>
    </source>
</evidence>
<protein>
    <recommendedName>
        <fullName evidence="1">tRNA pseudouridine synthase Pus10</fullName>
        <ecNumber evidence="1">5.4.99.25</ecNumber>
    </recommendedName>
    <alternativeName>
        <fullName evidence="1">tRNA pseudouridine 54/55 synthase</fullName>
        <shortName evidence="1">Psi54/55 synthase</shortName>
    </alternativeName>
</protein>